<feature type="chain" id="PRO_0000068595" description="Protein TraD">
    <location>
        <begin position="1"/>
        <end position="129"/>
    </location>
</feature>
<feature type="region of interest" description="Disordered" evidence="1">
    <location>
        <begin position="1"/>
        <end position="25"/>
    </location>
</feature>
<feature type="compositionally biased region" description="Polar residues" evidence="1">
    <location>
        <begin position="1"/>
        <end position="10"/>
    </location>
</feature>
<sequence>MNEQTTTNTAAHDEPLAVLPPVDDDAAGREAVREKMADALTPGFQVEFDPDEAERVGAFVEDALSEQDAAASGDDLVEVDGALEPAFLDDEGPSADIPPFITTTNARELYDLRPGETVAQAAARKASEG</sequence>
<geneLocation type="plasmid">
    <name>IncP-beta R751</name>
</geneLocation>
<protein>
    <recommendedName>
        <fullName>Protein TraD</fullName>
    </recommendedName>
</protein>
<gene>
    <name type="primary">traD</name>
</gene>
<name>TRAD5_ECOLX</name>
<comment type="similarity">
    <text evidence="2">To plasmid IncP-alpha RP4 TraD.</text>
</comment>
<evidence type="ECO:0000256" key="1">
    <source>
        <dbReference type="SAM" id="MobiDB-lite"/>
    </source>
</evidence>
<evidence type="ECO:0000305" key="2"/>
<dbReference type="EMBL" id="X59794">
    <property type="protein sequence ID" value="CAA42459.1"/>
    <property type="molecule type" value="Genomic_DNA"/>
</dbReference>
<dbReference type="EMBL" id="U67194">
    <property type="protein sequence ID" value="AAC64471.1"/>
    <property type="molecule type" value="Genomic_DNA"/>
</dbReference>
<dbReference type="PIR" id="S37670">
    <property type="entry name" value="S37670"/>
</dbReference>
<dbReference type="RefSeq" id="WP_006122510.1">
    <property type="nucleotide sequence ID" value="NZ_MW574946.1"/>
</dbReference>
<dbReference type="InterPro" id="IPR016703">
    <property type="entry name" value="Conjugal_tfr_TraD_b/g-type"/>
</dbReference>
<dbReference type="PIRSF" id="PIRSF017849">
    <property type="entry name" value="Conjugal_transfer_TraD"/>
    <property type="match status" value="1"/>
</dbReference>
<organism>
    <name type="scientific">Escherichia coli</name>
    <dbReference type="NCBI Taxonomy" id="562"/>
    <lineage>
        <taxon>Bacteria</taxon>
        <taxon>Pseudomonadati</taxon>
        <taxon>Pseudomonadota</taxon>
        <taxon>Gammaproteobacteria</taxon>
        <taxon>Enterobacterales</taxon>
        <taxon>Enterobacteriaceae</taxon>
        <taxon>Escherichia</taxon>
    </lineage>
</organism>
<keyword id="KW-0903">Direct protein sequencing</keyword>
<keyword id="KW-0614">Plasmid</keyword>
<proteinExistence type="evidence at protein level"/>
<accession>P27192</accession>
<reference key="1">
    <citation type="journal article" date="1991" name="DNA Seq.">
        <title>Gene organization and nucleotide sequence of the primase region of IncP plasmids RP4 and R751.</title>
        <authorList>
            <person name="Miele L."/>
            <person name="Strack B."/>
            <person name="Kruft V."/>
            <person name="Lanka E."/>
        </authorList>
    </citation>
    <scope>NUCLEOTIDE SEQUENCE [GENOMIC DNA]</scope>
    <scope>PROTEIN SEQUENCE OF 1-4</scope>
    <source>
        <strain>ATCC 33694 / HB101</strain>
    </source>
</reference>
<reference key="2">
    <citation type="submission" date="1996-08" db="EMBL/GenBank/DDBJ databases">
        <authorList>
            <person name="Thomas C.M."/>
        </authorList>
    </citation>
    <scope>NUCLEOTIDE SEQUENCE [GENOMIC DNA]</scope>
</reference>